<keyword id="KW-0378">Hydrolase</keyword>
<keyword id="KW-0449">Lipoprotein</keyword>
<keyword id="KW-0472">Membrane</keyword>
<keyword id="KW-0488">Methylation</keyword>
<keyword id="KW-0597">Phosphoprotein</keyword>
<keyword id="KW-0636">Prenylation</keyword>
<keyword id="KW-1185">Reference proteome</keyword>
<keyword id="KW-0694">RNA-binding</keyword>
<sequence>MNRGFSRKSHTFLPKIFFRKMSSSGTKDKPELQFPFLQDEDTVATLQECKTLFILRGLPGSGKSTLARVIVDKYRDGTKMVSADAYKITPGARGAFSEEYKRLDEDLAAYCRRRDIRILVLDDTNHERERLEQLFEMADQYQYQVVLVEPKTAWRLGCAQLKEKNQWQLSADDLKKLKPGLEKDFLPLYFGWFLTKKSSETLRKAGQVFLEELGNHKAFKKELRQFIPGDEPREKMDLVTYFGKRPPGVLHCTTKFCDYGKAPGAEEYAQQDVLKKSYSKAFTLTISALFVTPKTTGARVELSEQQLQLWPSDVDKLSPTDNLPRGSRAHITLGCAADVEAVQTGLDLLEILRQEKGGSRGEEVGELSRGKLYSLGNGRWMLTLAKNMEVRAIFTGYYGKGKPVPTQGSRKGGALQSCTII</sequence>
<organism>
    <name type="scientific">Pongo abelii</name>
    <name type="common">Sumatran orangutan</name>
    <name type="synonym">Pongo pygmaeus abelii</name>
    <dbReference type="NCBI Taxonomy" id="9601"/>
    <lineage>
        <taxon>Eukaryota</taxon>
        <taxon>Metazoa</taxon>
        <taxon>Chordata</taxon>
        <taxon>Craniata</taxon>
        <taxon>Vertebrata</taxon>
        <taxon>Euteleostomi</taxon>
        <taxon>Mammalia</taxon>
        <taxon>Eutheria</taxon>
        <taxon>Euarchontoglires</taxon>
        <taxon>Primates</taxon>
        <taxon>Haplorrhini</taxon>
        <taxon>Catarrhini</taxon>
        <taxon>Hominidae</taxon>
        <taxon>Pongo</taxon>
    </lineage>
</organism>
<proteinExistence type="evidence at transcript level"/>
<name>CN37_PONAB</name>
<evidence type="ECO:0000250" key="1"/>
<evidence type="ECO:0000250" key="2">
    <source>
        <dbReference type="UniProtKB" id="P06623"/>
    </source>
</evidence>
<evidence type="ECO:0000250" key="3">
    <source>
        <dbReference type="UniProtKB" id="P09543"/>
    </source>
</evidence>
<evidence type="ECO:0000250" key="4">
    <source>
        <dbReference type="UniProtKB" id="P13233"/>
    </source>
</evidence>
<evidence type="ECO:0000250" key="5">
    <source>
        <dbReference type="UniProtKB" id="P16330"/>
    </source>
</evidence>
<evidence type="ECO:0000305" key="6"/>
<accession>Q5RFD0</accession>
<dbReference type="EC" id="3.1.4.37" evidence="2"/>
<dbReference type="EMBL" id="CR857228">
    <property type="protein sequence ID" value="CAH89527.1"/>
    <property type="molecule type" value="mRNA"/>
</dbReference>
<dbReference type="RefSeq" id="NP_001124663.1">
    <property type="nucleotide sequence ID" value="NM_001131191.1"/>
</dbReference>
<dbReference type="SMR" id="Q5RFD0"/>
<dbReference type="FunCoup" id="Q5RFD0">
    <property type="interactions" value="1316"/>
</dbReference>
<dbReference type="STRING" id="9601.ENSPPYP00000009449"/>
<dbReference type="GeneID" id="100171506"/>
<dbReference type="KEGG" id="pon:100171506"/>
<dbReference type="CTD" id="1267"/>
<dbReference type="eggNOG" id="KOG2401">
    <property type="taxonomic scope" value="Eukaryota"/>
</dbReference>
<dbReference type="InParanoid" id="Q5RFD0"/>
<dbReference type="OrthoDB" id="3231855at2759"/>
<dbReference type="Proteomes" id="UP000001595">
    <property type="component" value="Unplaced"/>
</dbReference>
<dbReference type="GO" id="GO:0042470">
    <property type="term" value="C:melanosome"/>
    <property type="evidence" value="ECO:0007669"/>
    <property type="project" value="UniProtKB-SubCell"/>
</dbReference>
<dbReference type="GO" id="GO:0016020">
    <property type="term" value="C:membrane"/>
    <property type="evidence" value="ECO:0007669"/>
    <property type="project" value="UniProtKB-SubCell"/>
</dbReference>
<dbReference type="GO" id="GO:0004113">
    <property type="term" value="F:2',3'-cyclic-nucleotide 3'-phosphodiesterase activity"/>
    <property type="evidence" value="ECO:0000250"/>
    <property type="project" value="UniProtKB"/>
</dbReference>
<dbReference type="GO" id="GO:0003723">
    <property type="term" value="F:RNA binding"/>
    <property type="evidence" value="ECO:0007669"/>
    <property type="project" value="UniProtKB-KW"/>
</dbReference>
<dbReference type="GO" id="GO:0009214">
    <property type="term" value="P:cyclic nucleotide catabolic process"/>
    <property type="evidence" value="ECO:0007669"/>
    <property type="project" value="InterPro"/>
</dbReference>
<dbReference type="FunFam" id="3.40.50.300:FF:000795">
    <property type="entry name" value="Tetratricopeptide repeat protein 25"/>
    <property type="match status" value="1"/>
</dbReference>
<dbReference type="FunFam" id="3.90.1740.10:FF:000001">
    <property type="entry name" value="Tetratricopeptide repeat protein 25"/>
    <property type="match status" value="1"/>
</dbReference>
<dbReference type="Gene3D" id="3.90.1740.10">
    <property type="entry name" value="2',3'-cyclic nucleotide 3'-phosphodiesterase superfamily"/>
    <property type="match status" value="1"/>
</dbReference>
<dbReference type="Gene3D" id="3.40.50.300">
    <property type="entry name" value="P-loop containing nucleotide triphosphate hydrolases"/>
    <property type="match status" value="1"/>
</dbReference>
<dbReference type="InterPro" id="IPR008431">
    <property type="entry name" value="CNPase"/>
</dbReference>
<dbReference type="InterPro" id="IPR047325">
    <property type="entry name" value="CNPase_cat"/>
</dbReference>
<dbReference type="InterPro" id="IPR009097">
    <property type="entry name" value="Cyclic_Pdiesterase"/>
</dbReference>
<dbReference type="InterPro" id="IPR027417">
    <property type="entry name" value="P-loop_NTPase"/>
</dbReference>
<dbReference type="PANTHER" id="PTHR10156">
    <property type="entry name" value="2',3'-CYCLIC-NUCLEOTIDE 3'-PHOSPHODIESTERASE"/>
    <property type="match status" value="1"/>
</dbReference>
<dbReference type="PANTHER" id="PTHR10156:SF0">
    <property type="entry name" value="2',3'-CYCLIC-NUCLEOTIDE 3'-PHOSPHODIESTERASE"/>
    <property type="match status" value="1"/>
</dbReference>
<dbReference type="Pfam" id="PF13671">
    <property type="entry name" value="AAA_33"/>
    <property type="match status" value="1"/>
</dbReference>
<dbReference type="Pfam" id="PF05881">
    <property type="entry name" value="CNPase"/>
    <property type="match status" value="1"/>
</dbReference>
<dbReference type="PIRSF" id="PIRSF000970">
    <property type="entry name" value="CNPase"/>
    <property type="match status" value="1"/>
</dbReference>
<dbReference type="SUPFAM" id="SSF55144">
    <property type="entry name" value="LigT-like"/>
    <property type="match status" value="1"/>
</dbReference>
<dbReference type="SUPFAM" id="SSF52540">
    <property type="entry name" value="P-loop containing nucleoside triphosphate hydrolases"/>
    <property type="match status" value="1"/>
</dbReference>
<comment type="function">
    <text evidence="2 5">Catalyzes the formation of 2'-nucleotide products from 2',3'-cyclic substrates (By similarity). May participate in RNA metabolism in the myelinating cell, CNP is the third most abundant protein in central nervous system myelin (By similarity).</text>
</comment>
<comment type="catalytic activity">
    <reaction evidence="2">
        <text>a nucleoside 2',3'-cyclic phosphate + H2O = a nucleoside 2'-phosphate + H(+)</text>
        <dbReference type="Rhea" id="RHEA:14489"/>
        <dbReference type="ChEBI" id="CHEBI:15377"/>
        <dbReference type="ChEBI" id="CHEBI:15378"/>
        <dbReference type="ChEBI" id="CHEBI:66954"/>
        <dbReference type="ChEBI" id="CHEBI:78552"/>
        <dbReference type="EC" id="3.1.4.37"/>
    </reaction>
</comment>
<comment type="subunit">
    <text evidence="5">Exists as monomers and homodimers.</text>
</comment>
<comment type="subcellular location">
    <subcellularLocation>
        <location evidence="5">Membrane</location>
        <topology evidence="5">Lipid-anchor</topology>
    </subcellularLocation>
    <subcellularLocation>
        <location evidence="3">Melanosome</location>
    </subcellularLocation>
    <text evidence="5">Firmly bound to membrane structures of brain white matter.</text>
</comment>
<comment type="similarity">
    <text evidence="6">Belongs to the 2H phosphoesterase superfamily. CNPase family.</text>
</comment>
<reference key="1">
    <citation type="submission" date="2004-11" db="EMBL/GenBank/DDBJ databases">
        <authorList>
            <consortium name="The German cDNA consortium"/>
        </authorList>
    </citation>
    <scope>NUCLEOTIDE SEQUENCE [LARGE SCALE MRNA]</scope>
    <source>
        <tissue>Kidney</tissue>
    </source>
</reference>
<feature type="chain" id="PRO_0000290017" description="2',3'-cyclic-nucleotide 3'-phosphodiesterase">
    <location>
        <begin position="1"/>
        <end position="418"/>
    </location>
</feature>
<feature type="propeptide" id="PRO_0000422298" description="Removed in mature form" evidence="1">
    <location>
        <begin position="419"/>
        <end position="421"/>
    </location>
</feature>
<feature type="active site" description="Proton acceptor" evidence="1">
    <location>
        <position position="251"/>
    </location>
</feature>
<feature type="active site" description="Proton donor" evidence="1">
    <location>
        <position position="330"/>
    </location>
</feature>
<feature type="binding site" evidence="1">
    <location>
        <position position="253"/>
    </location>
    <ligand>
        <name>substrate</name>
    </ligand>
</feature>
<feature type="binding site" evidence="1">
    <location>
        <position position="332"/>
    </location>
    <ligand>
        <name>substrate</name>
    </ligand>
</feature>
<feature type="modified residue" description="Phosphoserine" evidence="3">
    <location>
        <position position="6"/>
    </location>
</feature>
<feature type="modified residue" description="Phosphoserine" evidence="3">
    <location>
        <position position="9"/>
    </location>
</feature>
<feature type="modified residue" description="Phosphotyrosine" evidence="5">
    <location>
        <position position="110"/>
    </location>
</feature>
<feature type="modified residue" description="Phosphoserine" evidence="3">
    <location>
        <position position="170"/>
    </location>
</feature>
<feature type="modified residue" description="Phosphoserine" evidence="4">
    <location>
        <position position="359"/>
    </location>
</feature>
<feature type="modified residue" description="Cysteine methyl ester" evidence="1">
    <location>
        <position position="418"/>
    </location>
</feature>
<feature type="lipid moiety-binding region" description="S-farnesyl cysteine" evidence="1">
    <location>
        <position position="418"/>
    </location>
</feature>
<protein>
    <recommendedName>
        <fullName evidence="3">2',3'-cyclic-nucleotide 3'-phosphodiesterase</fullName>
        <shortName>CNP</shortName>
        <shortName>CNPase</shortName>
        <ecNumber evidence="2">3.1.4.37</ecNumber>
    </recommendedName>
</protein>
<gene>
    <name evidence="3" type="primary">CNP</name>
</gene>